<sequence length="353" mass="40382">MFVDRLQLLNFRNYEELLIDFSPGKILIYGANGQGKTNLIEAIYYLVIGKSFRGKDNSLIRFGAESFQIGAKISKNGQKTTLGVEYSVKGKFFLKNGQKQKSFSSILGNLKGVLFTPDEPVIFFGFPANRRKALDLFLAQTSKTYLLNLIYYQKVLTNKNALLKQVWNVDNLIEAWNYKLAEFGAEIIKEREKCLKILNDIINELNAQLRFLPGKIEASYKTSGADDKEKIFELLKQKYTEEKDKKQALFGPHRDDLNFYVNGRDLKIFGSQGQKKGALLLFKLSQAVYMAKVSGEKPVVLLDDLYSEFDKEKREALEGFFLKYSDQVFITATEPIDLKNYHQVVFIENGKVS</sequence>
<reference key="1">
    <citation type="journal article" date="2005" name="PLoS Genet.">
        <title>Life in hot carbon monoxide: the complete genome sequence of Carboxydothermus hydrogenoformans Z-2901.</title>
        <authorList>
            <person name="Wu M."/>
            <person name="Ren Q."/>
            <person name="Durkin A.S."/>
            <person name="Daugherty S.C."/>
            <person name="Brinkac L.M."/>
            <person name="Dodson R.J."/>
            <person name="Madupu R."/>
            <person name="Sullivan S.A."/>
            <person name="Kolonay J.F."/>
            <person name="Nelson W.C."/>
            <person name="Tallon L.J."/>
            <person name="Jones K.M."/>
            <person name="Ulrich L.E."/>
            <person name="Gonzalez J.M."/>
            <person name="Zhulin I.B."/>
            <person name="Robb F.T."/>
            <person name="Eisen J.A."/>
        </authorList>
    </citation>
    <scope>NUCLEOTIDE SEQUENCE [LARGE SCALE GENOMIC DNA]</scope>
    <source>
        <strain>ATCC BAA-161 / DSM 6008 / Z-2901</strain>
    </source>
</reference>
<evidence type="ECO:0000255" key="1">
    <source>
        <dbReference type="HAMAP-Rule" id="MF_00365"/>
    </source>
</evidence>
<keyword id="KW-0067">ATP-binding</keyword>
<keyword id="KW-0963">Cytoplasm</keyword>
<keyword id="KW-0227">DNA damage</keyword>
<keyword id="KW-0234">DNA repair</keyword>
<keyword id="KW-0235">DNA replication</keyword>
<keyword id="KW-0238">DNA-binding</keyword>
<keyword id="KW-0547">Nucleotide-binding</keyword>
<keyword id="KW-1185">Reference proteome</keyword>
<keyword id="KW-0742">SOS response</keyword>
<proteinExistence type="inferred from homology"/>
<gene>
    <name evidence="1" type="primary">recF</name>
    <name type="ordered locus">CHY_2707</name>
</gene>
<comment type="function">
    <text evidence="1">The RecF protein is involved in DNA metabolism; it is required for DNA replication and normal SOS inducibility. RecF binds preferentially to single-stranded, linear DNA. It also seems to bind ATP.</text>
</comment>
<comment type="subcellular location">
    <subcellularLocation>
        <location evidence="1">Cytoplasm</location>
    </subcellularLocation>
</comment>
<comment type="similarity">
    <text evidence="1">Belongs to the RecF family.</text>
</comment>
<dbReference type="EMBL" id="CP000141">
    <property type="protein sequence ID" value="ABB15013.1"/>
    <property type="molecule type" value="Genomic_DNA"/>
</dbReference>
<dbReference type="RefSeq" id="WP_011345560.1">
    <property type="nucleotide sequence ID" value="NC_007503.1"/>
</dbReference>
<dbReference type="SMR" id="Q3A8P5"/>
<dbReference type="FunCoup" id="Q3A8P5">
    <property type="interactions" value="212"/>
</dbReference>
<dbReference type="STRING" id="246194.CHY_2707"/>
<dbReference type="KEGG" id="chy:CHY_2707"/>
<dbReference type="eggNOG" id="COG1195">
    <property type="taxonomic scope" value="Bacteria"/>
</dbReference>
<dbReference type="HOGENOM" id="CLU_040267_0_1_9"/>
<dbReference type="InParanoid" id="Q3A8P5"/>
<dbReference type="Proteomes" id="UP000002706">
    <property type="component" value="Chromosome"/>
</dbReference>
<dbReference type="GO" id="GO:0005737">
    <property type="term" value="C:cytoplasm"/>
    <property type="evidence" value="ECO:0007669"/>
    <property type="project" value="UniProtKB-SubCell"/>
</dbReference>
<dbReference type="GO" id="GO:0005524">
    <property type="term" value="F:ATP binding"/>
    <property type="evidence" value="ECO:0007669"/>
    <property type="project" value="UniProtKB-UniRule"/>
</dbReference>
<dbReference type="GO" id="GO:0003697">
    <property type="term" value="F:single-stranded DNA binding"/>
    <property type="evidence" value="ECO:0007669"/>
    <property type="project" value="UniProtKB-UniRule"/>
</dbReference>
<dbReference type="GO" id="GO:0006260">
    <property type="term" value="P:DNA replication"/>
    <property type="evidence" value="ECO:0007669"/>
    <property type="project" value="UniProtKB-UniRule"/>
</dbReference>
<dbReference type="GO" id="GO:0000731">
    <property type="term" value="P:DNA synthesis involved in DNA repair"/>
    <property type="evidence" value="ECO:0007669"/>
    <property type="project" value="TreeGrafter"/>
</dbReference>
<dbReference type="GO" id="GO:0006302">
    <property type="term" value="P:double-strand break repair"/>
    <property type="evidence" value="ECO:0007669"/>
    <property type="project" value="TreeGrafter"/>
</dbReference>
<dbReference type="GO" id="GO:0009432">
    <property type="term" value="P:SOS response"/>
    <property type="evidence" value="ECO:0007669"/>
    <property type="project" value="UniProtKB-UniRule"/>
</dbReference>
<dbReference type="Gene3D" id="3.40.50.300">
    <property type="entry name" value="P-loop containing nucleotide triphosphate hydrolases"/>
    <property type="match status" value="1"/>
</dbReference>
<dbReference type="Gene3D" id="1.20.1050.90">
    <property type="entry name" value="RecF/RecN/SMC, N-terminal domain"/>
    <property type="match status" value="1"/>
</dbReference>
<dbReference type="HAMAP" id="MF_00365">
    <property type="entry name" value="RecF"/>
    <property type="match status" value="1"/>
</dbReference>
<dbReference type="InterPro" id="IPR001238">
    <property type="entry name" value="DNA-binding_RecF"/>
</dbReference>
<dbReference type="InterPro" id="IPR027417">
    <property type="entry name" value="P-loop_NTPase"/>
</dbReference>
<dbReference type="InterPro" id="IPR003395">
    <property type="entry name" value="RecF/RecN/SMC_N"/>
</dbReference>
<dbReference type="InterPro" id="IPR042174">
    <property type="entry name" value="RecF_2"/>
</dbReference>
<dbReference type="NCBIfam" id="TIGR00611">
    <property type="entry name" value="recf"/>
    <property type="match status" value="1"/>
</dbReference>
<dbReference type="PANTHER" id="PTHR32182">
    <property type="entry name" value="DNA REPLICATION AND REPAIR PROTEIN RECF"/>
    <property type="match status" value="1"/>
</dbReference>
<dbReference type="PANTHER" id="PTHR32182:SF0">
    <property type="entry name" value="DNA REPLICATION AND REPAIR PROTEIN RECF"/>
    <property type="match status" value="1"/>
</dbReference>
<dbReference type="Pfam" id="PF02463">
    <property type="entry name" value="SMC_N"/>
    <property type="match status" value="1"/>
</dbReference>
<dbReference type="SUPFAM" id="SSF52540">
    <property type="entry name" value="P-loop containing nucleoside triphosphate hydrolases"/>
    <property type="match status" value="1"/>
</dbReference>
<organism>
    <name type="scientific">Carboxydothermus hydrogenoformans (strain ATCC BAA-161 / DSM 6008 / Z-2901)</name>
    <dbReference type="NCBI Taxonomy" id="246194"/>
    <lineage>
        <taxon>Bacteria</taxon>
        <taxon>Bacillati</taxon>
        <taxon>Bacillota</taxon>
        <taxon>Clostridia</taxon>
        <taxon>Thermoanaerobacterales</taxon>
        <taxon>Thermoanaerobacteraceae</taxon>
        <taxon>Carboxydothermus</taxon>
    </lineage>
</organism>
<name>RECF_CARHZ</name>
<protein>
    <recommendedName>
        <fullName evidence="1">DNA replication and repair protein RecF</fullName>
    </recommendedName>
</protein>
<accession>Q3A8P5</accession>
<feature type="chain" id="PRO_1000121091" description="DNA replication and repair protein RecF">
    <location>
        <begin position="1"/>
        <end position="353"/>
    </location>
</feature>
<feature type="binding site" evidence="1">
    <location>
        <begin position="30"/>
        <end position="37"/>
    </location>
    <ligand>
        <name>ATP</name>
        <dbReference type="ChEBI" id="CHEBI:30616"/>
    </ligand>
</feature>